<feature type="chain" id="PRO_0000295514" description="Small COPII coat GTPase SAR1">
    <location>
        <begin position="1"/>
        <end position="190"/>
    </location>
</feature>
<feature type="binding site" evidence="1">
    <location>
        <begin position="27"/>
        <end position="34"/>
    </location>
    <ligand>
        <name>GTP</name>
        <dbReference type="ChEBI" id="CHEBI:37565"/>
    </ligand>
</feature>
<feature type="binding site" evidence="1">
    <location>
        <begin position="70"/>
        <end position="73"/>
    </location>
    <ligand>
        <name>GTP</name>
        <dbReference type="ChEBI" id="CHEBI:37565"/>
    </ligand>
</feature>
<feature type="binding site" evidence="1">
    <location>
        <begin position="129"/>
        <end position="132"/>
    </location>
    <ligand>
        <name>GTP</name>
        <dbReference type="ChEBI" id="CHEBI:37565"/>
    </ligand>
</feature>
<comment type="function">
    <text evidence="1">Small GTPase component of the coat protein complex II (COPII) which promotes the formation of transport vesicles from the endoplasmic reticulum (ER). The coat has two main functions, the physical deformation of the endoplasmic reticulum membrane into vesicles and the selection of cargo molecules. SAR1 controls the coat assembly in a stepwise manner. Activated SAR1-GTP binds to membranes first and recruits the SEC23/24 complex. These SEC23/24-SAR1 prebudding intermediates are then collected by the SEC13/31 complex as subunits polymerize to form coated transport vesicles. Conversion to SAR1-GDP triggers coat release and recycles COPII subunits (By similarity).</text>
</comment>
<comment type="catalytic activity">
    <reaction>
        <text>GTP + H2O = GDP + phosphate + H(+)</text>
        <dbReference type="Rhea" id="RHEA:19669"/>
        <dbReference type="ChEBI" id="CHEBI:15377"/>
        <dbReference type="ChEBI" id="CHEBI:15378"/>
        <dbReference type="ChEBI" id="CHEBI:37565"/>
        <dbReference type="ChEBI" id="CHEBI:43474"/>
        <dbReference type="ChEBI" id="CHEBI:58189"/>
    </reaction>
</comment>
<comment type="subunit">
    <text evidence="1">COPII is composed of at least 5 proteins: the SEC23/24 complex, the SEC13/31 complex and SAR1.</text>
</comment>
<comment type="subcellular location">
    <subcellularLocation>
        <location evidence="1">Cytoplasmic vesicle</location>
        <location evidence="1">COPII-coated vesicle membrane</location>
        <topology evidence="1">Peripheral membrane protein</topology>
        <orientation evidence="1">Cytoplasmic side</orientation>
    </subcellularLocation>
    <subcellularLocation>
        <location evidence="1">Endoplasmic reticulum membrane</location>
        <topology evidence="1">Peripheral membrane protein</topology>
        <orientation evidence="1">Cytoplasmic side</orientation>
    </subcellularLocation>
    <subcellularLocation>
        <location evidence="1">Golgi apparatus membrane</location>
        <topology evidence="1">Peripheral membrane protein</topology>
        <orientation evidence="1">Cytoplasmic side</orientation>
    </subcellularLocation>
</comment>
<comment type="similarity">
    <text evidence="2">Belongs to the small GTPase superfamily. SAR1 family.</text>
</comment>
<reference key="1">
    <citation type="journal article" date="2004" name="Nature">
        <title>Genome evolution in yeasts.</title>
        <authorList>
            <person name="Dujon B."/>
            <person name="Sherman D."/>
            <person name="Fischer G."/>
            <person name="Durrens P."/>
            <person name="Casaregola S."/>
            <person name="Lafontaine I."/>
            <person name="de Montigny J."/>
            <person name="Marck C."/>
            <person name="Neuveglise C."/>
            <person name="Talla E."/>
            <person name="Goffard N."/>
            <person name="Frangeul L."/>
            <person name="Aigle M."/>
            <person name="Anthouard V."/>
            <person name="Babour A."/>
            <person name="Barbe V."/>
            <person name="Barnay S."/>
            <person name="Blanchin S."/>
            <person name="Beckerich J.-M."/>
            <person name="Beyne E."/>
            <person name="Bleykasten C."/>
            <person name="Boisrame A."/>
            <person name="Boyer J."/>
            <person name="Cattolico L."/>
            <person name="Confanioleri F."/>
            <person name="de Daruvar A."/>
            <person name="Despons L."/>
            <person name="Fabre E."/>
            <person name="Fairhead C."/>
            <person name="Ferry-Dumazet H."/>
            <person name="Groppi A."/>
            <person name="Hantraye F."/>
            <person name="Hennequin C."/>
            <person name="Jauniaux N."/>
            <person name="Joyet P."/>
            <person name="Kachouri R."/>
            <person name="Kerrest A."/>
            <person name="Koszul R."/>
            <person name="Lemaire M."/>
            <person name="Lesur I."/>
            <person name="Ma L."/>
            <person name="Muller H."/>
            <person name="Nicaud J.-M."/>
            <person name="Nikolski M."/>
            <person name="Oztas S."/>
            <person name="Ozier-Kalogeropoulos O."/>
            <person name="Pellenz S."/>
            <person name="Potier S."/>
            <person name="Richard G.-F."/>
            <person name="Straub M.-L."/>
            <person name="Suleau A."/>
            <person name="Swennen D."/>
            <person name="Tekaia F."/>
            <person name="Wesolowski-Louvel M."/>
            <person name="Westhof E."/>
            <person name="Wirth B."/>
            <person name="Zeniou-Meyer M."/>
            <person name="Zivanovic Y."/>
            <person name="Bolotin-Fukuhara M."/>
            <person name="Thierry A."/>
            <person name="Bouchier C."/>
            <person name="Caudron B."/>
            <person name="Scarpelli C."/>
            <person name="Gaillardin C."/>
            <person name="Weissenbach J."/>
            <person name="Wincker P."/>
            <person name="Souciet J.-L."/>
        </authorList>
    </citation>
    <scope>NUCLEOTIDE SEQUENCE [LARGE SCALE GENOMIC DNA]</scope>
    <source>
        <strain>ATCC 36239 / CBS 767 / BCRC 21394 / JCM 1990 / NBRC 0083 / IGC 2968</strain>
    </source>
</reference>
<organism>
    <name type="scientific">Debaryomyces hansenii (strain ATCC 36239 / CBS 767 / BCRC 21394 / JCM 1990 / NBRC 0083 / IGC 2968)</name>
    <name type="common">Yeast</name>
    <name type="synonym">Torulaspora hansenii</name>
    <dbReference type="NCBI Taxonomy" id="284592"/>
    <lineage>
        <taxon>Eukaryota</taxon>
        <taxon>Fungi</taxon>
        <taxon>Dikarya</taxon>
        <taxon>Ascomycota</taxon>
        <taxon>Saccharomycotina</taxon>
        <taxon>Pichiomycetes</taxon>
        <taxon>Debaryomycetaceae</taxon>
        <taxon>Debaryomyces</taxon>
    </lineage>
</organism>
<name>SAR1_DEBHA</name>
<proteinExistence type="inferred from homology"/>
<keyword id="KW-0968">Cytoplasmic vesicle</keyword>
<keyword id="KW-0256">Endoplasmic reticulum</keyword>
<keyword id="KW-0931">ER-Golgi transport</keyword>
<keyword id="KW-0333">Golgi apparatus</keyword>
<keyword id="KW-0342">GTP-binding</keyword>
<keyword id="KW-0378">Hydrolase</keyword>
<keyword id="KW-0472">Membrane</keyword>
<keyword id="KW-0547">Nucleotide-binding</keyword>
<keyword id="KW-0653">Protein transport</keyword>
<keyword id="KW-1185">Reference proteome</keyword>
<keyword id="KW-0813">Transport</keyword>
<protein>
    <recommendedName>
        <fullName>Small COPII coat GTPase SAR1</fullName>
        <ecNumber>3.6.5.-</ecNumber>
    </recommendedName>
</protein>
<accession>Q6BVA7</accession>
<sequence>MWLFDWFQDVLASLGLWNKHAKLLFLGLDNAGKTTLLHMLKNDRLATLQPTLHPTSEELAIGSVRFTTFDLGGHQQARRLWKDYFPEVNGIVFLVDAADPERFAESKAELESLFKIEELASVPFLILGNKIDASSAVGEMELKSALGLYNTTGKDTGKLPEGQRPIEVFMVSVVMRMGYGDGFKWLSQYI</sequence>
<dbReference type="EC" id="3.6.5.-"/>
<dbReference type="EMBL" id="CR382135">
    <property type="protein sequence ID" value="CAG85907.1"/>
    <property type="molecule type" value="Genomic_DNA"/>
</dbReference>
<dbReference type="RefSeq" id="XP_457862.1">
    <property type="nucleotide sequence ID" value="XM_457862.1"/>
</dbReference>
<dbReference type="SMR" id="Q6BVA7"/>
<dbReference type="FunCoup" id="Q6BVA7">
    <property type="interactions" value="963"/>
</dbReference>
<dbReference type="STRING" id="284592.Q6BVA7"/>
<dbReference type="GeneID" id="2900019"/>
<dbReference type="KEGG" id="dha:DEHA2C04092g"/>
<dbReference type="VEuPathDB" id="FungiDB:DEHA2C04092g"/>
<dbReference type="eggNOG" id="KOG0077">
    <property type="taxonomic scope" value="Eukaryota"/>
</dbReference>
<dbReference type="HOGENOM" id="CLU_040729_6_0_1"/>
<dbReference type="InParanoid" id="Q6BVA7"/>
<dbReference type="OMA" id="GLWNKHG"/>
<dbReference type="OrthoDB" id="2011769at2759"/>
<dbReference type="Proteomes" id="UP000000599">
    <property type="component" value="Chromosome C"/>
</dbReference>
<dbReference type="GO" id="GO:0030127">
    <property type="term" value="C:COPII vesicle coat"/>
    <property type="evidence" value="ECO:0007669"/>
    <property type="project" value="EnsemblFungi"/>
</dbReference>
<dbReference type="GO" id="GO:0070971">
    <property type="term" value="C:endoplasmic reticulum exit site"/>
    <property type="evidence" value="ECO:0007669"/>
    <property type="project" value="EnsemblFungi"/>
</dbReference>
<dbReference type="GO" id="GO:0005789">
    <property type="term" value="C:endoplasmic reticulum membrane"/>
    <property type="evidence" value="ECO:0007669"/>
    <property type="project" value="UniProtKB-SubCell"/>
</dbReference>
<dbReference type="GO" id="GO:0000139">
    <property type="term" value="C:Golgi membrane"/>
    <property type="evidence" value="ECO:0007669"/>
    <property type="project" value="UniProtKB-SubCell"/>
</dbReference>
<dbReference type="GO" id="GO:0044233">
    <property type="term" value="C:mitochondria-associated endoplasmic reticulum membrane contact site"/>
    <property type="evidence" value="ECO:0007669"/>
    <property type="project" value="EnsemblFungi"/>
</dbReference>
<dbReference type="GO" id="GO:0005739">
    <property type="term" value="C:mitochondrion"/>
    <property type="evidence" value="ECO:0007669"/>
    <property type="project" value="GOC"/>
</dbReference>
<dbReference type="GO" id="GO:0005525">
    <property type="term" value="F:GTP binding"/>
    <property type="evidence" value="ECO:0007669"/>
    <property type="project" value="UniProtKB-KW"/>
</dbReference>
<dbReference type="GO" id="GO:0003924">
    <property type="term" value="F:GTPase activity"/>
    <property type="evidence" value="ECO:0007669"/>
    <property type="project" value="EnsemblFungi"/>
</dbReference>
<dbReference type="GO" id="GO:0090158">
    <property type="term" value="P:endoplasmic reticulum membrane organization"/>
    <property type="evidence" value="ECO:0007669"/>
    <property type="project" value="EnsemblFungi"/>
</dbReference>
<dbReference type="GO" id="GO:0006888">
    <property type="term" value="P:endoplasmic reticulum to Golgi vesicle-mediated transport"/>
    <property type="evidence" value="ECO:0007669"/>
    <property type="project" value="EnsemblFungi"/>
</dbReference>
<dbReference type="GO" id="GO:0006886">
    <property type="term" value="P:intracellular protein transport"/>
    <property type="evidence" value="ECO:0007669"/>
    <property type="project" value="InterPro"/>
</dbReference>
<dbReference type="GO" id="GO:0000266">
    <property type="term" value="P:mitochondrial fission"/>
    <property type="evidence" value="ECO:0007669"/>
    <property type="project" value="EnsemblFungi"/>
</dbReference>
<dbReference type="GO" id="GO:0007006">
    <property type="term" value="P:mitochondrial membrane organization"/>
    <property type="evidence" value="ECO:0007669"/>
    <property type="project" value="EnsemblFungi"/>
</dbReference>
<dbReference type="GO" id="GO:0006998">
    <property type="term" value="P:nuclear envelope organization"/>
    <property type="evidence" value="ECO:0007669"/>
    <property type="project" value="EnsemblFungi"/>
</dbReference>
<dbReference type="GO" id="GO:1902953">
    <property type="term" value="P:positive regulation of ER to Golgi vesicle-mediated transport"/>
    <property type="evidence" value="ECO:0007669"/>
    <property type="project" value="EnsemblFungi"/>
</dbReference>
<dbReference type="GO" id="GO:0070863">
    <property type="term" value="P:positive regulation of protein exit from endoplasmic reticulum"/>
    <property type="evidence" value="ECO:0007669"/>
    <property type="project" value="EnsemblFungi"/>
</dbReference>
<dbReference type="GO" id="GO:0003400">
    <property type="term" value="P:regulation of COPII vesicle coating"/>
    <property type="evidence" value="ECO:0007669"/>
    <property type="project" value="EnsemblFungi"/>
</dbReference>
<dbReference type="GO" id="GO:0016050">
    <property type="term" value="P:vesicle organization"/>
    <property type="evidence" value="ECO:0007669"/>
    <property type="project" value="EnsemblFungi"/>
</dbReference>
<dbReference type="CDD" id="cd00879">
    <property type="entry name" value="Sar1"/>
    <property type="match status" value="1"/>
</dbReference>
<dbReference type="FunFam" id="3.40.50.300:FF:000161">
    <property type="entry name" value="Small COPII coat GTPase"/>
    <property type="match status" value="1"/>
</dbReference>
<dbReference type="Gene3D" id="3.40.50.300">
    <property type="entry name" value="P-loop containing nucleotide triphosphate hydrolases"/>
    <property type="match status" value="1"/>
</dbReference>
<dbReference type="InterPro" id="IPR027417">
    <property type="entry name" value="P-loop_NTPase"/>
</dbReference>
<dbReference type="InterPro" id="IPR005225">
    <property type="entry name" value="Small_GTP-bd"/>
</dbReference>
<dbReference type="InterPro" id="IPR006689">
    <property type="entry name" value="Small_GTPase_ARF/SAR"/>
</dbReference>
<dbReference type="InterPro" id="IPR006687">
    <property type="entry name" value="Small_GTPase_SAR1"/>
</dbReference>
<dbReference type="NCBIfam" id="TIGR00231">
    <property type="entry name" value="small_GTP"/>
    <property type="match status" value="1"/>
</dbReference>
<dbReference type="PANTHER" id="PTHR45684">
    <property type="entry name" value="RE74312P"/>
    <property type="match status" value="1"/>
</dbReference>
<dbReference type="Pfam" id="PF00025">
    <property type="entry name" value="Arf"/>
    <property type="match status" value="1"/>
</dbReference>
<dbReference type="PRINTS" id="PR00328">
    <property type="entry name" value="SAR1GTPBP"/>
</dbReference>
<dbReference type="SMART" id="SM00177">
    <property type="entry name" value="ARF"/>
    <property type="match status" value="1"/>
</dbReference>
<dbReference type="SMART" id="SM00178">
    <property type="entry name" value="SAR"/>
    <property type="match status" value="1"/>
</dbReference>
<dbReference type="SUPFAM" id="SSF52540">
    <property type="entry name" value="P-loop containing nucleoside triphosphate hydrolases"/>
    <property type="match status" value="1"/>
</dbReference>
<dbReference type="PROSITE" id="PS51422">
    <property type="entry name" value="SAR1"/>
    <property type="match status" value="1"/>
</dbReference>
<gene>
    <name type="primary">SAR1</name>
    <name type="ordered locus">DEHA2C04092g</name>
</gene>
<evidence type="ECO:0000250" key="1"/>
<evidence type="ECO:0000305" key="2"/>